<dbReference type="EC" id="4.2.3.4" evidence="1"/>
<dbReference type="EMBL" id="CP000725">
    <property type="protein sequence ID" value="ABV10313.1"/>
    <property type="molecule type" value="Genomic_DNA"/>
</dbReference>
<dbReference type="RefSeq" id="WP_012130461.1">
    <property type="nucleotide sequence ID" value="NC_009785.1"/>
</dbReference>
<dbReference type="SMR" id="A8AXZ4"/>
<dbReference type="STRING" id="467705.SGO_1373"/>
<dbReference type="KEGG" id="sgo:SGO_1373"/>
<dbReference type="eggNOG" id="COG0337">
    <property type="taxonomic scope" value="Bacteria"/>
</dbReference>
<dbReference type="HOGENOM" id="CLU_001201_0_1_9"/>
<dbReference type="UniPathway" id="UPA00053">
    <property type="reaction ID" value="UER00085"/>
</dbReference>
<dbReference type="Proteomes" id="UP000001131">
    <property type="component" value="Chromosome"/>
</dbReference>
<dbReference type="GO" id="GO:0005737">
    <property type="term" value="C:cytoplasm"/>
    <property type="evidence" value="ECO:0007669"/>
    <property type="project" value="UniProtKB-SubCell"/>
</dbReference>
<dbReference type="GO" id="GO:0003856">
    <property type="term" value="F:3-dehydroquinate synthase activity"/>
    <property type="evidence" value="ECO:0007669"/>
    <property type="project" value="UniProtKB-UniRule"/>
</dbReference>
<dbReference type="GO" id="GO:0046872">
    <property type="term" value="F:metal ion binding"/>
    <property type="evidence" value="ECO:0007669"/>
    <property type="project" value="UniProtKB-KW"/>
</dbReference>
<dbReference type="GO" id="GO:0000166">
    <property type="term" value="F:nucleotide binding"/>
    <property type="evidence" value="ECO:0007669"/>
    <property type="project" value="UniProtKB-KW"/>
</dbReference>
<dbReference type="GO" id="GO:0008652">
    <property type="term" value="P:amino acid biosynthetic process"/>
    <property type="evidence" value="ECO:0007669"/>
    <property type="project" value="UniProtKB-KW"/>
</dbReference>
<dbReference type="GO" id="GO:0009073">
    <property type="term" value="P:aromatic amino acid family biosynthetic process"/>
    <property type="evidence" value="ECO:0007669"/>
    <property type="project" value="UniProtKB-KW"/>
</dbReference>
<dbReference type="GO" id="GO:0009423">
    <property type="term" value="P:chorismate biosynthetic process"/>
    <property type="evidence" value="ECO:0007669"/>
    <property type="project" value="UniProtKB-UniRule"/>
</dbReference>
<dbReference type="CDD" id="cd08195">
    <property type="entry name" value="DHQS"/>
    <property type="match status" value="1"/>
</dbReference>
<dbReference type="FunFam" id="3.40.50.1970:FF:000001">
    <property type="entry name" value="3-dehydroquinate synthase"/>
    <property type="match status" value="1"/>
</dbReference>
<dbReference type="Gene3D" id="3.40.50.1970">
    <property type="match status" value="1"/>
</dbReference>
<dbReference type="Gene3D" id="1.20.1090.10">
    <property type="entry name" value="Dehydroquinate synthase-like - alpha domain"/>
    <property type="match status" value="1"/>
</dbReference>
<dbReference type="HAMAP" id="MF_00110">
    <property type="entry name" value="DHQ_synthase"/>
    <property type="match status" value="1"/>
</dbReference>
<dbReference type="InterPro" id="IPR050071">
    <property type="entry name" value="Dehydroquinate_synthase"/>
</dbReference>
<dbReference type="InterPro" id="IPR016037">
    <property type="entry name" value="DHQ_synth_AroB"/>
</dbReference>
<dbReference type="InterPro" id="IPR030963">
    <property type="entry name" value="DHQ_synth_fam"/>
</dbReference>
<dbReference type="InterPro" id="IPR030960">
    <property type="entry name" value="DHQS/DOIS_N"/>
</dbReference>
<dbReference type="InterPro" id="IPR056179">
    <property type="entry name" value="DHQS_C"/>
</dbReference>
<dbReference type="NCBIfam" id="TIGR01357">
    <property type="entry name" value="aroB"/>
    <property type="match status" value="1"/>
</dbReference>
<dbReference type="PANTHER" id="PTHR43622">
    <property type="entry name" value="3-DEHYDROQUINATE SYNTHASE"/>
    <property type="match status" value="1"/>
</dbReference>
<dbReference type="PANTHER" id="PTHR43622:SF7">
    <property type="entry name" value="3-DEHYDROQUINATE SYNTHASE, CHLOROPLASTIC"/>
    <property type="match status" value="1"/>
</dbReference>
<dbReference type="Pfam" id="PF01761">
    <property type="entry name" value="DHQ_synthase"/>
    <property type="match status" value="1"/>
</dbReference>
<dbReference type="Pfam" id="PF24621">
    <property type="entry name" value="DHQS_C"/>
    <property type="match status" value="1"/>
</dbReference>
<dbReference type="PIRSF" id="PIRSF001455">
    <property type="entry name" value="DHQ_synth"/>
    <property type="match status" value="1"/>
</dbReference>
<dbReference type="SUPFAM" id="SSF56796">
    <property type="entry name" value="Dehydroquinate synthase-like"/>
    <property type="match status" value="1"/>
</dbReference>
<protein>
    <recommendedName>
        <fullName evidence="1">3-dehydroquinate synthase</fullName>
        <shortName evidence="1">DHQS</shortName>
        <ecNumber evidence="1">4.2.3.4</ecNumber>
    </recommendedName>
</protein>
<accession>A8AXZ4</accession>
<comment type="function">
    <text evidence="1">Catalyzes the conversion of 3-deoxy-D-arabino-heptulosonate 7-phosphate (DAHP) to dehydroquinate (DHQ).</text>
</comment>
<comment type="catalytic activity">
    <reaction evidence="1">
        <text>7-phospho-2-dehydro-3-deoxy-D-arabino-heptonate = 3-dehydroquinate + phosphate</text>
        <dbReference type="Rhea" id="RHEA:21968"/>
        <dbReference type="ChEBI" id="CHEBI:32364"/>
        <dbReference type="ChEBI" id="CHEBI:43474"/>
        <dbReference type="ChEBI" id="CHEBI:58394"/>
        <dbReference type="EC" id="4.2.3.4"/>
    </reaction>
</comment>
<comment type="cofactor">
    <cofactor evidence="1">
        <name>Co(2+)</name>
        <dbReference type="ChEBI" id="CHEBI:48828"/>
    </cofactor>
    <cofactor evidence="1">
        <name>Zn(2+)</name>
        <dbReference type="ChEBI" id="CHEBI:29105"/>
    </cofactor>
    <text evidence="1">Binds 1 divalent metal cation per subunit. Can use either Co(2+) or Zn(2+).</text>
</comment>
<comment type="cofactor">
    <cofactor evidence="1">
        <name>NAD(+)</name>
        <dbReference type="ChEBI" id="CHEBI:57540"/>
    </cofactor>
</comment>
<comment type="pathway">
    <text evidence="1">Metabolic intermediate biosynthesis; chorismate biosynthesis; chorismate from D-erythrose 4-phosphate and phosphoenolpyruvate: step 2/7.</text>
</comment>
<comment type="subcellular location">
    <subcellularLocation>
        <location evidence="1">Cytoplasm</location>
    </subcellularLocation>
</comment>
<comment type="similarity">
    <text evidence="1">Belongs to the sugar phosphate cyclases superfamily. Dehydroquinate synthase family.</text>
</comment>
<reference key="1">
    <citation type="journal article" date="2007" name="J. Bacteriol.">
        <title>Genome-wide transcriptional changes in Streptococcus gordonii in response to competence signaling peptide.</title>
        <authorList>
            <person name="Vickerman M.M."/>
            <person name="Iobst S."/>
            <person name="Jesionowski A.M."/>
            <person name="Gill S.R."/>
        </authorList>
    </citation>
    <scope>NUCLEOTIDE SEQUENCE [LARGE SCALE GENOMIC DNA]</scope>
    <source>
        <strain>Challis / ATCC 35105 / BCRC 15272 / CH1 / DL1 / V288</strain>
    </source>
</reference>
<proteinExistence type="inferred from homology"/>
<feature type="chain" id="PRO_1000094633" description="3-dehydroquinate synthase">
    <location>
        <begin position="1"/>
        <end position="355"/>
    </location>
</feature>
<feature type="binding site" evidence="1">
    <location>
        <begin position="71"/>
        <end position="76"/>
    </location>
    <ligand>
        <name>NAD(+)</name>
        <dbReference type="ChEBI" id="CHEBI:57540"/>
    </ligand>
</feature>
<feature type="binding site" evidence="1">
    <location>
        <begin position="105"/>
        <end position="109"/>
    </location>
    <ligand>
        <name>NAD(+)</name>
        <dbReference type="ChEBI" id="CHEBI:57540"/>
    </ligand>
</feature>
<feature type="binding site" evidence="1">
    <location>
        <begin position="129"/>
        <end position="130"/>
    </location>
    <ligand>
        <name>NAD(+)</name>
        <dbReference type="ChEBI" id="CHEBI:57540"/>
    </ligand>
</feature>
<feature type="binding site" evidence="1">
    <location>
        <position position="142"/>
    </location>
    <ligand>
        <name>NAD(+)</name>
        <dbReference type="ChEBI" id="CHEBI:57540"/>
    </ligand>
</feature>
<feature type="binding site" evidence="1">
    <location>
        <position position="151"/>
    </location>
    <ligand>
        <name>NAD(+)</name>
        <dbReference type="ChEBI" id="CHEBI:57540"/>
    </ligand>
</feature>
<feature type="binding site" evidence="1">
    <location>
        <position position="184"/>
    </location>
    <ligand>
        <name>Zn(2+)</name>
        <dbReference type="ChEBI" id="CHEBI:29105"/>
    </ligand>
</feature>
<feature type="binding site" evidence="1">
    <location>
        <position position="246"/>
    </location>
    <ligand>
        <name>Zn(2+)</name>
        <dbReference type="ChEBI" id="CHEBI:29105"/>
    </ligand>
</feature>
<feature type="binding site" evidence="1">
    <location>
        <position position="263"/>
    </location>
    <ligand>
        <name>Zn(2+)</name>
        <dbReference type="ChEBI" id="CHEBI:29105"/>
    </ligand>
</feature>
<keyword id="KW-0028">Amino-acid biosynthesis</keyword>
<keyword id="KW-0057">Aromatic amino acid biosynthesis</keyword>
<keyword id="KW-0170">Cobalt</keyword>
<keyword id="KW-0963">Cytoplasm</keyword>
<keyword id="KW-0456">Lyase</keyword>
<keyword id="KW-0479">Metal-binding</keyword>
<keyword id="KW-0520">NAD</keyword>
<keyword id="KW-0547">Nucleotide-binding</keyword>
<keyword id="KW-1185">Reference proteome</keyword>
<keyword id="KW-0862">Zinc</keyword>
<name>AROB_STRGC</name>
<evidence type="ECO:0000255" key="1">
    <source>
        <dbReference type="HAMAP-Rule" id="MF_00110"/>
    </source>
</evidence>
<gene>
    <name evidence="1" type="primary">aroB</name>
    <name type="ordered locus">SGO_1373</name>
</gene>
<sequence>MKLNVNLPHHPYDIVIENGALSQVGSWLSQLWQPQKLVVITDNRVARLYAEKVKLSLEAAGFKVFTFDFLEGEASKNLTTVNKAYEFLAKVGLTRSDGIVALGGGVVGDLAGFVASTYMRGIHFVQIPTSLTAQVDSSIGGKTGVNTPWAKNMVGTFTQPDGVLIDPEVLHTLGQRELIEGMGEVVKYGLIEDKELWDELSEMDGSPESILEHAESIIYHSCDVKRKIVIEDELDNGVRLYLNFGHTIGHAIEATAGYGQVMHGEAVAIGMVQVSRVAEKQGLMPAGITEDIIHMCQKFGLPVDYQPWNENALYQALTHDKKARGNSIKLVLVPELGSANIHQIPLEEMKEFLKK</sequence>
<organism>
    <name type="scientific">Streptococcus gordonii (strain Challis / ATCC 35105 / BCRC 15272 / CH1 / DL1 / V288)</name>
    <dbReference type="NCBI Taxonomy" id="467705"/>
    <lineage>
        <taxon>Bacteria</taxon>
        <taxon>Bacillati</taxon>
        <taxon>Bacillota</taxon>
        <taxon>Bacilli</taxon>
        <taxon>Lactobacillales</taxon>
        <taxon>Streptococcaceae</taxon>
        <taxon>Streptococcus</taxon>
    </lineage>
</organism>